<name>MEND_YERP3</name>
<proteinExistence type="inferred from homology"/>
<sequence>MSTSVFNRRWAALLLEALTRHGVRHICIAPGSRSTPLTLAAAANPSLVCHTHFDERGLGHLALGLAKASTEPVAVIVTSGTAVANLYPALIEAGLTGERLILLTADRPPELIDCGANQAIRQQGLFASHPTLSVNLPRPTPDISARWLVSTLDSAMAQLQHGALHINCPFAEPLYGGDEQQYADWSASLGDWWQDCHPWLRQTCYPPSLYQPLAQQADWFFWRQKRGVVIAGRMGAEEGRQLTAWAAMLGWPLIGDVLSQTGQPLPCADLWLAHPRAQETLAQAQIVLQFGSSLTSKRLLQWQTACQPQEYWLVDSAPGRLDPANHRGRRIICPVGEWLSRHPAQRRTPWATELAAYSESAQAQVIETLAGQFSEAAVAHQLAELLPDNGQLFVGNSLIIRLIDALGQLPAGYPVYSNRGASGIDGLLSTAAGVQRATAKPTLAIVGDLSALYDLNALALLRQSSAPMVLLVINNNGGQIFSLLPTPEAERQRFYCMPQDVNFEHAAVMFSLGYARPNSWPQLREHVHQCWLRGGTTLIEVQVPPSQGAETLQQLVQQVTLIPQVAP</sequence>
<keyword id="KW-0460">Magnesium</keyword>
<keyword id="KW-0464">Manganese</keyword>
<keyword id="KW-0474">Menaquinone biosynthesis</keyword>
<keyword id="KW-0479">Metal-binding</keyword>
<keyword id="KW-0786">Thiamine pyrophosphate</keyword>
<keyword id="KW-0808">Transferase</keyword>
<evidence type="ECO:0000255" key="1">
    <source>
        <dbReference type="HAMAP-Rule" id="MF_01659"/>
    </source>
</evidence>
<organism>
    <name type="scientific">Yersinia pseudotuberculosis serotype O:1b (strain IP 31758)</name>
    <dbReference type="NCBI Taxonomy" id="349747"/>
    <lineage>
        <taxon>Bacteria</taxon>
        <taxon>Pseudomonadati</taxon>
        <taxon>Pseudomonadota</taxon>
        <taxon>Gammaproteobacteria</taxon>
        <taxon>Enterobacterales</taxon>
        <taxon>Yersiniaceae</taxon>
        <taxon>Yersinia</taxon>
    </lineage>
</organism>
<comment type="function">
    <text evidence="1">Catalyzes the thiamine diphosphate-dependent decarboxylation of 2-oxoglutarate and the subsequent addition of the resulting succinic semialdehyde-thiamine pyrophosphate anion to isochorismate to yield 2-succinyl-5-enolpyruvyl-6-hydroxy-3-cyclohexene-1-carboxylate (SEPHCHC).</text>
</comment>
<comment type="catalytic activity">
    <reaction evidence="1">
        <text>isochorismate + 2-oxoglutarate + H(+) = 5-enolpyruvoyl-6-hydroxy-2-succinyl-cyclohex-3-ene-1-carboxylate + CO2</text>
        <dbReference type="Rhea" id="RHEA:25593"/>
        <dbReference type="ChEBI" id="CHEBI:15378"/>
        <dbReference type="ChEBI" id="CHEBI:16526"/>
        <dbReference type="ChEBI" id="CHEBI:16810"/>
        <dbReference type="ChEBI" id="CHEBI:29780"/>
        <dbReference type="ChEBI" id="CHEBI:58818"/>
        <dbReference type="EC" id="2.2.1.9"/>
    </reaction>
</comment>
<comment type="cofactor">
    <cofactor evidence="1">
        <name>Mg(2+)</name>
        <dbReference type="ChEBI" id="CHEBI:18420"/>
    </cofactor>
    <cofactor evidence="1">
        <name>Mn(2+)</name>
        <dbReference type="ChEBI" id="CHEBI:29035"/>
    </cofactor>
</comment>
<comment type="cofactor">
    <cofactor evidence="1">
        <name>thiamine diphosphate</name>
        <dbReference type="ChEBI" id="CHEBI:58937"/>
    </cofactor>
    <text evidence="1">Binds 1 thiamine pyrophosphate per subunit.</text>
</comment>
<comment type="pathway">
    <text evidence="1">Quinol/quinone metabolism; 1,4-dihydroxy-2-naphthoate biosynthesis; 1,4-dihydroxy-2-naphthoate from chorismate: step 2/7.</text>
</comment>
<comment type="pathway">
    <text evidence="1">Quinol/quinone metabolism; menaquinone biosynthesis.</text>
</comment>
<comment type="subunit">
    <text evidence="1">Homodimer.</text>
</comment>
<comment type="similarity">
    <text evidence="1">Belongs to the TPP enzyme family. MenD subfamily.</text>
</comment>
<reference key="1">
    <citation type="journal article" date="2007" name="PLoS Genet.">
        <title>The complete genome sequence of Yersinia pseudotuberculosis IP31758, the causative agent of Far East scarlet-like fever.</title>
        <authorList>
            <person name="Eppinger M."/>
            <person name="Rosovitz M.J."/>
            <person name="Fricke W.F."/>
            <person name="Rasko D.A."/>
            <person name="Kokorina G."/>
            <person name="Fayolle C."/>
            <person name="Lindler L.E."/>
            <person name="Carniel E."/>
            <person name="Ravel J."/>
        </authorList>
    </citation>
    <scope>NUCLEOTIDE SEQUENCE [LARGE SCALE GENOMIC DNA]</scope>
    <source>
        <strain>IP 31758</strain>
    </source>
</reference>
<protein>
    <recommendedName>
        <fullName evidence="1">2-succinyl-5-enolpyruvyl-6-hydroxy-3-cyclohexene-1-carboxylate synthase</fullName>
        <shortName evidence="1">SEPHCHC synthase</shortName>
        <ecNumber evidence="1">2.2.1.9</ecNumber>
    </recommendedName>
    <alternativeName>
        <fullName evidence="1">Menaquinone biosynthesis protein MenD</fullName>
    </alternativeName>
</protein>
<accession>A7FGT2</accession>
<gene>
    <name evidence="1" type="primary">menD</name>
    <name type="ordered locus">YpsIP31758_1482</name>
</gene>
<dbReference type="EC" id="2.2.1.9" evidence="1"/>
<dbReference type="EMBL" id="CP000720">
    <property type="protein sequence ID" value="ABS46962.1"/>
    <property type="molecule type" value="Genomic_DNA"/>
</dbReference>
<dbReference type="RefSeq" id="WP_012104914.1">
    <property type="nucleotide sequence ID" value="NC_009708.1"/>
</dbReference>
<dbReference type="SMR" id="A7FGT2"/>
<dbReference type="KEGG" id="ypi:YpsIP31758_1482"/>
<dbReference type="HOGENOM" id="CLU_006051_3_0_6"/>
<dbReference type="UniPathway" id="UPA00079"/>
<dbReference type="UniPathway" id="UPA01057">
    <property type="reaction ID" value="UER00164"/>
</dbReference>
<dbReference type="Proteomes" id="UP000002412">
    <property type="component" value="Chromosome"/>
</dbReference>
<dbReference type="GO" id="GO:0070204">
    <property type="term" value="F:2-succinyl-5-enolpyruvyl-6-hydroxy-3-cyclohexene-1-carboxylic-acid synthase activity"/>
    <property type="evidence" value="ECO:0007669"/>
    <property type="project" value="UniProtKB-UniRule"/>
</dbReference>
<dbReference type="GO" id="GO:0000287">
    <property type="term" value="F:magnesium ion binding"/>
    <property type="evidence" value="ECO:0007669"/>
    <property type="project" value="UniProtKB-UniRule"/>
</dbReference>
<dbReference type="GO" id="GO:0030145">
    <property type="term" value="F:manganese ion binding"/>
    <property type="evidence" value="ECO:0007669"/>
    <property type="project" value="UniProtKB-UniRule"/>
</dbReference>
<dbReference type="GO" id="GO:0030976">
    <property type="term" value="F:thiamine pyrophosphate binding"/>
    <property type="evidence" value="ECO:0007669"/>
    <property type="project" value="UniProtKB-UniRule"/>
</dbReference>
<dbReference type="GO" id="GO:0009234">
    <property type="term" value="P:menaquinone biosynthetic process"/>
    <property type="evidence" value="ECO:0007669"/>
    <property type="project" value="UniProtKB-UniRule"/>
</dbReference>
<dbReference type="CDD" id="cd07037">
    <property type="entry name" value="TPP_PYR_MenD"/>
    <property type="match status" value="1"/>
</dbReference>
<dbReference type="CDD" id="cd02009">
    <property type="entry name" value="TPP_SHCHC_synthase"/>
    <property type="match status" value="1"/>
</dbReference>
<dbReference type="FunFam" id="3.40.50.970:FF:000029">
    <property type="entry name" value="2-succinyl-5-enolpyruvyl-6-hydroxy-3-cyclohexene-1-carboxylate synthase"/>
    <property type="match status" value="1"/>
</dbReference>
<dbReference type="Gene3D" id="3.40.50.970">
    <property type="match status" value="2"/>
</dbReference>
<dbReference type="Gene3D" id="3.40.50.1220">
    <property type="entry name" value="TPP-binding domain"/>
    <property type="match status" value="1"/>
</dbReference>
<dbReference type="HAMAP" id="MF_01659">
    <property type="entry name" value="MenD"/>
    <property type="match status" value="1"/>
</dbReference>
<dbReference type="InterPro" id="IPR004433">
    <property type="entry name" value="MenaQ_synth_MenD"/>
</dbReference>
<dbReference type="InterPro" id="IPR032264">
    <property type="entry name" value="MenD_middle"/>
</dbReference>
<dbReference type="InterPro" id="IPR029061">
    <property type="entry name" value="THDP-binding"/>
</dbReference>
<dbReference type="InterPro" id="IPR012001">
    <property type="entry name" value="Thiamin_PyroP_enz_TPP-bd_dom"/>
</dbReference>
<dbReference type="InterPro" id="IPR011766">
    <property type="entry name" value="TPP_enzyme_TPP-bd"/>
</dbReference>
<dbReference type="NCBIfam" id="TIGR00173">
    <property type="entry name" value="menD"/>
    <property type="match status" value="1"/>
</dbReference>
<dbReference type="PANTHER" id="PTHR42916">
    <property type="entry name" value="2-SUCCINYL-5-ENOLPYRUVYL-6-HYDROXY-3-CYCLOHEXENE-1-CARBOXYLATE SYNTHASE"/>
    <property type="match status" value="1"/>
</dbReference>
<dbReference type="PANTHER" id="PTHR42916:SF1">
    <property type="entry name" value="PROTEIN PHYLLO, CHLOROPLASTIC"/>
    <property type="match status" value="1"/>
</dbReference>
<dbReference type="Pfam" id="PF02775">
    <property type="entry name" value="TPP_enzyme_C"/>
    <property type="match status" value="1"/>
</dbReference>
<dbReference type="Pfam" id="PF16582">
    <property type="entry name" value="TPP_enzyme_M_2"/>
    <property type="match status" value="1"/>
</dbReference>
<dbReference type="Pfam" id="PF02776">
    <property type="entry name" value="TPP_enzyme_N"/>
    <property type="match status" value="1"/>
</dbReference>
<dbReference type="PIRSF" id="PIRSF004983">
    <property type="entry name" value="MenD"/>
    <property type="match status" value="1"/>
</dbReference>
<dbReference type="SUPFAM" id="SSF52518">
    <property type="entry name" value="Thiamin diphosphate-binding fold (THDP-binding)"/>
    <property type="match status" value="2"/>
</dbReference>
<feature type="chain" id="PRO_1000187100" description="2-succinyl-5-enolpyruvyl-6-hydroxy-3-cyclohexene-1-carboxylate synthase">
    <location>
        <begin position="1"/>
        <end position="567"/>
    </location>
</feature>